<evidence type="ECO:0000255" key="1">
    <source>
        <dbReference type="HAMAP-Rule" id="MF_00175"/>
    </source>
</evidence>
<evidence type="ECO:0000255" key="2">
    <source>
        <dbReference type="PROSITE-ProRule" id="PRU01250"/>
    </source>
</evidence>
<protein>
    <recommendedName>
        <fullName evidence="1">ATP-dependent Clp protease ATP-binding subunit ClpX</fullName>
    </recommendedName>
</protein>
<reference key="1">
    <citation type="submission" date="2006-08" db="EMBL/GenBank/DDBJ databases">
        <title>Complete sequence of Shewanella frigidimarina NCIMB 400.</title>
        <authorList>
            <consortium name="US DOE Joint Genome Institute"/>
            <person name="Copeland A."/>
            <person name="Lucas S."/>
            <person name="Lapidus A."/>
            <person name="Barry K."/>
            <person name="Detter J.C."/>
            <person name="Glavina del Rio T."/>
            <person name="Hammon N."/>
            <person name="Israni S."/>
            <person name="Dalin E."/>
            <person name="Tice H."/>
            <person name="Pitluck S."/>
            <person name="Fredrickson J.K."/>
            <person name="Kolker E."/>
            <person name="McCuel L.A."/>
            <person name="DiChristina T."/>
            <person name="Nealson K.H."/>
            <person name="Newman D."/>
            <person name="Tiedje J.M."/>
            <person name="Zhou J."/>
            <person name="Romine M.F."/>
            <person name="Culley D.E."/>
            <person name="Serres M."/>
            <person name="Chertkov O."/>
            <person name="Brettin T."/>
            <person name="Bruce D."/>
            <person name="Han C."/>
            <person name="Tapia R."/>
            <person name="Gilna P."/>
            <person name="Schmutz J."/>
            <person name="Larimer F."/>
            <person name="Land M."/>
            <person name="Hauser L."/>
            <person name="Kyrpides N."/>
            <person name="Mikhailova N."/>
            <person name="Richardson P."/>
        </authorList>
    </citation>
    <scope>NUCLEOTIDE SEQUENCE [LARGE SCALE GENOMIC DNA]</scope>
    <source>
        <strain>NCIMB 400</strain>
    </source>
</reference>
<accession>Q07ZX9</accession>
<gene>
    <name evidence="1" type="primary">clpX</name>
    <name type="ordered locus">Sfri_2595</name>
</gene>
<sequence>MGDNKNNGDSGKLLYCSFCGKSQHEVRKLIAGPSVYVCDECVDLCNDIIREEIKEISPKRDEDKLPTPHELRKHLDDYVIGQDQAKKVLAVAVYNHYKRLRNGAIKDGVELGKSNILLLGPTGSGKTLLAETLARSLNVPFAMADATTLTEAGYVGEDVENIIQKLLQKCDYDVEKAERGIVYIDEIDKISRKSDNPSITRDVSGEGVQQALLKLIEGTVASVPPQGGRKHPQQEFLQVDTSKILFICGGAFAGLEKVIEQRAHTGTGIGFGAEVKGEADKATISQILSQVEPGDLVKFGLIPEFIGRLPVVATLTELDEAALVQILSEPKNALTKQYSALFEMEDVELEFRDDALQAIAQKAMSRKTGARGLRSIVESILLDTMYDIPSTQGVIKAVVDESVVKGESAPILIYENTETQAASGEQ</sequence>
<comment type="function">
    <text evidence="1">ATP-dependent specificity component of the Clp protease. It directs the protease to specific substrates. Can perform chaperone functions in the absence of ClpP.</text>
</comment>
<comment type="subunit">
    <text evidence="1">Component of the ClpX-ClpP complex. Forms a hexameric ring that, in the presence of ATP, binds to fourteen ClpP subunits assembled into a disk-like structure with a central cavity, resembling the structure of eukaryotic proteasomes.</text>
</comment>
<comment type="similarity">
    <text evidence="1">Belongs to the ClpX chaperone family.</text>
</comment>
<organism>
    <name type="scientific">Shewanella frigidimarina (strain NCIMB 400)</name>
    <dbReference type="NCBI Taxonomy" id="318167"/>
    <lineage>
        <taxon>Bacteria</taxon>
        <taxon>Pseudomonadati</taxon>
        <taxon>Pseudomonadota</taxon>
        <taxon>Gammaproteobacteria</taxon>
        <taxon>Alteromonadales</taxon>
        <taxon>Shewanellaceae</taxon>
        <taxon>Shewanella</taxon>
    </lineage>
</organism>
<dbReference type="EMBL" id="CP000447">
    <property type="protein sequence ID" value="ABI72436.1"/>
    <property type="molecule type" value="Genomic_DNA"/>
</dbReference>
<dbReference type="RefSeq" id="WP_011638045.1">
    <property type="nucleotide sequence ID" value="NC_008345.1"/>
</dbReference>
<dbReference type="SMR" id="Q07ZX9"/>
<dbReference type="STRING" id="318167.Sfri_2595"/>
<dbReference type="KEGG" id="sfr:Sfri_2595"/>
<dbReference type="eggNOG" id="COG1219">
    <property type="taxonomic scope" value="Bacteria"/>
</dbReference>
<dbReference type="HOGENOM" id="CLU_014218_8_2_6"/>
<dbReference type="OrthoDB" id="9804062at2"/>
<dbReference type="Proteomes" id="UP000000684">
    <property type="component" value="Chromosome"/>
</dbReference>
<dbReference type="GO" id="GO:0009376">
    <property type="term" value="C:HslUV protease complex"/>
    <property type="evidence" value="ECO:0007669"/>
    <property type="project" value="TreeGrafter"/>
</dbReference>
<dbReference type="GO" id="GO:0005524">
    <property type="term" value="F:ATP binding"/>
    <property type="evidence" value="ECO:0007669"/>
    <property type="project" value="UniProtKB-UniRule"/>
</dbReference>
<dbReference type="GO" id="GO:0016887">
    <property type="term" value="F:ATP hydrolysis activity"/>
    <property type="evidence" value="ECO:0007669"/>
    <property type="project" value="InterPro"/>
</dbReference>
<dbReference type="GO" id="GO:0140662">
    <property type="term" value="F:ATP-dependent protein folding chaperone"/>
    <property type="evidence" value="ECO:0007669"/>
    <property type="project" value="InterPro"/>
</dbReference>
<dbReference type="GO" id="GO:0046983">
    <property type="term" value="F:protein dimerization activity"/>
    <property type="evidence" value="ECO:0007669"/>
    <property type="project" value="InterPro"/>
</dbReference>
<dbReference type="GO" id="GO:0051082">
    <property type="term" value="F:unfolded protein binding"/>
    <property type="evidence" value="ECO:0007669"/>
    <property type="project" value="UniProtKB-UniRule"/>
</dbReference>
<dbReference type="GO" id="GO:0008270">
    <property type="term" value="F:zinc ion binding"/>
    <property type="evidence" value="ECO:0007669"/>
    <property type="project" value="InterPro"/>
</dbReference>
<dbReference type="GO" id="GO:0051301">
    <property type="term" value="P:cell division"/>
    <property type="evidence" value="ECO:0007669"/>
    <property type="project" value="TreeGrafter"/>
</dbReference>
<dbReference type="GO" id="GO:0051603">
    <property type="term" value="P:proteolysis involved in protein catabolic process"/>
    <property type="evidence" value="ECO:0007669"/>
    <property type="project" value="TreeGrafter"/>
</dbReference>
<dbReference type="CDD" id="cd19497">
    <property type="entry name" value="RecA-like_ClpX"/>
    <property type="match status" value="1"/>
</dbReference>
<dbReference type="FunFam" id="1.10.8.60:FF:000002">
    <property type="entry name" value="ATP-dependent Clp protease ATP-binding subunit ClpX"/>
    <property type="match status" value="1"/>
</dbReference>
<dbReference type="FunFam" id="3.40.50.300:FF:000005">
    <property type="entry name" value="ATP-dependent Clp protease ATP-binding subunit ClpX"/>
    <property type="match status" value="1"/>
</dbReference>
<dbReference type="Gene3D" id="1.10.8.60">
    <property type="match status" value="1"/>
</dbReference>
<dbReference type="Gene3D" id="6.20.220.10">
    <property type="entry name" value="ClpX chaperone, C4-type zinc finger domain"/>
    <property type="match status" value="1"/>
</dbReference>
<dbReference type="Gene3D" id="3.40.50.300">
    <property type="entry name" value="P-loop containing nucleotide triphosphate hydrolases"/>
    <property type="match status" value="1"/>
</dbReference>
<dbReference type="HAMAP" id="MF_00175">
    <property type="entry name" value="ClpX"/>
    <property type="match status" value="1"/>
</dbReference>
<dbReference type="InterPro" id="IPR003593">
    <property type="entry name" value="AAA+_ATPase"/>
</dbReference>
<dbReference type="InterPro" id="IPR050052">
    <property type="entry name" value="ATP-dep_Clp_protease_ClpX"/>
</dbReference>
<dbReference type="InterPro" id="IPR003959">
    <property type="entry name" value="ATPase_AAA_core"/>
</dbReference>
<dbReference type="InterPro" id="IPR019489">
    <property type="entry name" value="Clp_ATPase_C"/>
</dbReference>
<dbReference type="InterPro" id="IPR004487">
    <property type="entry name" value="Clp_protease_ATP-bd_su_ClpX"/>
</dbReference>
<dbReference type="InterPro" id="IPR046425">
    <property type="entry name" value="ClpX_bact"/>
</dbReference>
<dbReference type="InterPro" id="IPR027417">
    <property type="entry name" value="P-loop_NTPase"/>
</dbReference>
<dbReference type="InterPro" id="IPR010603">
    <property type="entry name" value="Znf_CppX_C4"/>
</dbReference>
<dbReference type="InterPro" id="IPR038366">
    <property type="entry name" value="Znf_CppX_C4_sf"/>
</dbReference>
<dbReference type="NCBIfam" id="TIGR00382">
    <property type="entry name" value="clpX"/>
    <property type="match status" value="1"/>
</dbReference>
<dbReference type="NCBIfam" id="NF003745">
    <property type="entry name" value="PRK05342.1"/>
    <property type="match status" value="1"/>
</dbReference>
<dbReference type="PANTHER" id="PTHR48102:SF7">
    <property type="entry name" value="ATP-DEPENDENT CLP PROTEASE ATP-BINDING SUBUNIT CLPX-LIKE, MITOCHONDRIAL"/>
    <property type="match status" value="1"/>
</dbReference>
<dbReference type="PANTHER" id="PTHR48102">
    <property type="entry name" value="ATP-DEPENDENT CLP PROTEASE ATP-BINDING SUBUNIT CLPX-LIKE, MITOCHONDRIAL-RELATED"/>
    <property type="match status" value="1"/>
</dbReference>
<dbReference type="Pfam" id="PF07724">
    <property type="entry name" value="AAA_2"/>
    <property type="match status" value="1"/>
</dbReference>
<dbReference type="Pfam" id="PF10431">
    <property type="entry name" value="ClpB_D2-small"/>
    <property type="match status" value="1"/>
</dbReference>
<dbReference type="Pfam" id="PF06689">
    <property type="entry name" value="zf-C4_ClpX"/>
    <property type="match status" value="1"/>
</dbReference>
<dbReference type="SMART" id="SM00382">
    <property type="entry name" value="AAA"/>
    <property type="match status" value="1"/>
</dbReference>
<dbReference type="SMART" id="SM01086">
    <property type="entry name" value="ClpB_D2-small"/>
    <property type="match status" value="1"/>
</dbReference>
<dbReference type="SMART" id="SM00994">
    <property type="entry name" value="zf-C4_ClpX"/>
    <property type="match status" value="1"/>
</dbReference>
<dbReference type="SUPFAM" id="SSF57716">
    <property type="entry name" value="Glucocorticoid receptor-like (DNA-binding domain)"/>
    <property type="match status" value="1"/>
</dbReference>
<dbReference type="SUPFAM" id="SSF52540">
    <property type="entry name" value="P-loop containing nucleoside triphosphate hydrolases"/>
    <property type="match status" value="1"/>
</dbReference>
<dbReference type="PROSITE" id="PS51902">
    <property type="entry name" value="CLPX_ZB"/>
    <property type="match status" value="1"/>
</dbReference>
<name>CLPX_SHEFN</name>
<feature type="chain" id="PRO_1000024653" description="ATP-dependent Clp protease ATP-binding subunit ClpX">
    <location>
        <begin position="1"/>
        <end position="426"/>
    </location>
</feature>
<feature type="domain" description="ClpX-type ZB" evidence="2">
    <location>
        <begin position="4"/>
        <end position="57"/>
    </location>
</feature>
<feature type="binding site" evidence="2">
    <location>
        <position position="16"/>
    </location>
    <ligand>
        <name>Zn(2+)</name>
        <dbReference type="ChEBI" id="CHEBI:29105"/>
    </ligand>
</feature>
<feature type="binding site" evidence="2">
    <location>
        <position position="19"/>
    </location>
    <ligand>
        <name>Zn(2+)</name>
        <dbReference type="ChEBI" id="CHEBI:29105"/>
    </ligand>
</feature>
<feature type="binding site" evidence="2">
    <location>
        <position position="38"/>
    </location>
    <ligand>
        <name>Zn(2+)</name>
        <dbReference type="ChEBI" id="CHEBI:29105"/>
    </ligand>
</feature>
<feature type="binding site" evidence="2">
    <location>
        <position position="41"/>
    </location>
    <ligand>
        <name>Zn(2+)</name>
        <dbReference type="ChEBI" id="CHEBI:29105"/>
    </ligand>
</feature>
<feature type="binding site" evidence="1">
    <location>
        <begin position="121"/>
        <end position="128"/>
    </location>
    <ligand>
        <name>ATP</name>
        <dbReference type="ChEBI" id="CHEBI:30616"/>
    </ligand>
</feature>
<proteinExistence type="inferred from homology"/>
<keyword id="KW-0067">ATP-binding</keyword>
<keyword id="KW-0143">Chaperone</keyword>
<keyword id="KW-0479">Metal-binding</keyword>
<keyword id="KW-0547">Nucleotide-binding</keyword>
<keyword id="KW-1185">Reference proteome</keyword>
<keyword id="KW-0862">Zinc</keyword>